<feature type="transit peptide" description="Mitochondrion" evidence="1">
    <location>
        <begin position="1"/>
        <end status="unknown"/>
    </location>
</feature>
<feature type="chain" id="PRO_0000020866" description="Cruciform cutting endonuclease 1, mitochondrial">
    <location>
        <begin status="unknown"/>
        <end position="353"/>
    </location>
</feature>
<feature type="binding site">
    <location>
        <position position="293"/>
    </location>
    <ligand>
        <name>Mg(2+)</name>
        <dbReference type="ChEBI" id="CHEBI:18420"/>
    </ligand>
</feature>
<feature type="binding site">
    <location>
        <position position="294"/>
    </location>
    <ligand>
        <name>Mg(2+)</name>
        <dbReference type="ChEBI" id="CHEBI:18420"/>
    </ligand>
</feature>
<feature type="mutagenesis site" description="&gt;200-fold decrease in activity." evidence="2">
    <original>F</original>
    <variation>A</variation>
    <location>
        <position position="79"/>
    </location>
</feature>
<feature type="mutagenesis site" description="&gt;200-fold decrease in activity." evidence="2">
    <original>E</original>
    <variation>Q</variation>
    <location>
        <position position="145"/>
    </location>
</feature>
<feature type="mutagenesis site" description="100-fold decrease in activity." evidence="2">
    <original>R</original>
    <variation>A</variation>
    <location>
        <position position="146"/>
    </location>
</feature>
<feature type="mutagenesis site" description="70-fold decrease in activity." evidence="2">
    <original>Q</original>
    <variation>A</variation>
    <location>
        <position position="147"/>
    </location>
</feature>
<feature type="mutagenesis site" description="4-fold decrease in activity." evidence="2">
    <original>R</original>
    <variation>A</variation>
    <location>
        <position position="150"/>
    </location>
</feature>
<feature type="mutagenesis site" description="&gt;200-fold decrease in activity." evidence="2">
    <original>R</original>
    <variation>A</variation>
    <location>
        <position position="231"/>
    </location>
</feature>
<feature type="mutagenesis site" description="47-fold decrease in activity." evidence="2">
    <original>R</original>
    <variation>K</variation>
    <location>
        <position position="231"/>
    </location>
</feature>
<feature type="mutagenesis site" description="&gt;200-fold decrease in activity." evidence="2">
    <original>K</original>
    <variation>A</variation>
    <variation>R</variation>
    <location>
        <position position="291"/>
    </location>
</feature>
<feature type="mutagenesis site" description="80-fold decrease in activity." evidence="2">
    <original>D</original>
    <variation>N</variation>
    <location>
        <position position="292"/>
    </location>
</feature>
<feature type="mutagenesis site" description="&gt;200-fold decrease in activity." evidence="2">
    <original>D</original>
    <variation>N</variation>
    <location>
        <position position="293"/>
    </location>
</feature>
<feature type="mutagenesis site" description="&gt;200-fold decrease in activity." evidence="2">
    <original>D</original>
    <variation>N</variation>
    <location>
        <position position="294"/>
    </location>
</feature>
<proteinExistence type="evidence at protein level"/>
<reference key="1">
    <citation type="journal article" date="1992" name="EMBO J.">
        <title>Identification and characterization of yeast mutants and the gene for a cruciform cutting endonuclease.</title>
        <authorList>
            <person name="Kleff S."/>
            <person name="Kemper B."/>
            <person name="Sternglanz R."/>
        </authorList>
    </citation>
    <scope>NUCLEOTIDE SEQUENCE [GENOMIC DNA]</scope>
</reference>
<reference key="2">
    <citation type="journal article" date="1996" name="J. Mol. Biol.">
        <title>The structure-selectivity and sequence-preference of the junction-resolving enzyme CCE1 of Saccharomyces cerevisiae.</title>
        <authorList>
            <person name="White M.F."/>
            <person name="Lilley D.M."/>
        </authorList>
    </citation>
    <scope>NUCLEOTIDE SEQUENCE [GENOMIC DNA]</scope>
    <scope>FUNCTION</scope>
    <scope>CATALYTIC ACTIVITY</scope>
    <scope>COFACTOR</scope>
    <scope>SUBUNIT</scope>
</reference>
<reference key="3">
    <citation type="journal article" date="1992" name="Yeast">
        <title>The sequence of a 9.3 kb segment located on the left arm of the yeast chromosome XI reveals five open reading frames including the CCE1 gene and putative products related to MYO2 and to the ribosomal protein L10.</title>
        <authorList>
            <person name="Pascolo S."/>
            <person name="Ghazvini M."/>
            <person name="Boyer J."/>
            <person name="Colleaux L."/>
            <person name="Thierry A."/>
            <person name="Dujon B."/>
        </authorList>
    </citation>
    <scope>NUCLEOTIDE SEQUENCE [GENOMIC DNA]</scope>
</reference>
<reference key="4">
    <citation type="journal article" date="1994" name="Nature">
        <title>Complete DNA sequence of yeast chromosome XI.</title>
        <authorList>
            <person name="Dujon B."/>
            <person name="Alexandraki D."/>
            <person name="Andre B."/>
            <person name="Ansorge W."/>
            <person name="Baladron V."/>
            <person name="Ballesta J.P.G."/>
            <person name="Banrevi A."/>
            <person name="Bolle P.-A."/>
            <person name="Bolotin-Fukuhara M."/>
            <person name="Bossier P."/>
            <person name="Bou G."/>
            <person name="Boyer J."/>
            <person name="Buitrago M.J."/>
            <person name="Cheret G."/>
            <person name="Colleaux L."/>
            <person name="Daignan-Fornier B."/>
            <person name="del Rey F."/>
            <person name="Dion C."/>
            <person name="Domdey H."/>
            <person name="Duesterhoeft A."/>
            <person name="Duesterhus S."/>
            <person name="Entian K.-D."/>
            <person name="Erfle H."/>
            <person name="Esteban P.F."/>
            <person name="Feldmann H."/>
            <person name="Fernandes L."/>
            <person name="Fobo G.M."/>
            <person name="Fritz C."/>
            <person name="Fukuhara H."/>
            <person name="Gabel C."/>
            <person name="Gaillon L."/>
            <person name="Garcia-Cantalejo J.M."/>
            <person name="Garcia-Ramirez J.J."/>
            <person name="Gent M.E."/>
            <person name="Ghazvini M."/>
            <person name="Goffeau A."/>
            <person name="Gonzalez A."/>
            <person name="Grothues D."/>
            <person name="Guerreiro P."/>
            <person name="Hegemann J.H."/>
            <person name="Hewitt N."/>
            <person name="Hilger F."/>
            <person name="Hollenberg C.P."/>
            <person name="Horaitis O."/>
            <person name="Indge K.J."/>
            <person name="Jacquier A."/>
            <person name="James C.M."/>
            <person name="Jauniaux J.-C."/>
            <person name="Jimenez A."/>
            <person name="Keuchel H."/>
            <person name="Kirchrath L."/>
            <person name="Kleine K."/>
            <person name="Koetter P."/>
            <person name="Legrain P."/>
            <person name="Liebl S."/>
            <person name="Louis E.J."/>
            <person name="Maia e Silva A."/>
            <person name="Marck C."/>
            <person name="Monnier A.-L."/>
            <person name="Moestl D."/>
            <person name="Mueller S."/>
            <person name="Obermaier B."/>
            <person name="Oliver S.G."/>
            <person name="Pallier C."/>
            <person name="Pascolo S."/>
            <person name="Pfeiffer F."/>
            <person name="Philippsen P."/>
            <person name="Planta R.J."/>
            <person name="Pohl F.M."/>
            <person name="Pohl T.M."/>
            <person name="Poehlmann R."/>
            <person name="Portetelle D."/>
            <person name="Purnelle B."/>
            <person name="Puzos V."/>
            <person name="Ramezani Rad M."/>
            <person name="Rasmussen S.W."/>
            <person name="Remacha M.A."/>
            <person name="Revuelta J.L."/>
            <person name="Richard G.-F."/>
            <person name="Rieger M."/>
            <person name="Rodrigues-Pousada C."/>
            <person name="Rose M."/>
            <person name="Rupp T."/>
            <person name="Santos M.A."/>
            <person name="Schwager C."/>
            <person name="Sensen C."/>
            <person name="Skala J."/>
            <person name="Soares H."/>
            <person name="Sor F."/>
            <person name="Stegemann J."/>
            <person name="Tettelin H."/>
            <person name="Thierry A."/>
            <person name="Tzermia M."/>
            <person name="Urrestarazu L.A."/>
            <person name="van Dyck L."/>
            <person name="van Vliet-Reedijk J.C."/>
            <person name="Valens M."/>
            <person name="Vandenbol M."/>
            <person name="Vilela C."/>
            <person name="Vissers S."/>
            <person name="von Wettstein D."/>
            <person name="Voss H."/>
            <person name="Wiemann S."/>
            <person name="Xu G."/>
            <person name="Zimmermann J."/>
            <person name="Haasemann M."/>
            <person name="Becker I."/>
            <person name="Mewes H.-W."/>
        </authorList>
    </citation>
    <scope>NUCLEOTIDE SEQUENCE [LARGE SCALE GENOMIC DNA]</scope>
    <source>
        <strain>ATCC 204508 / S288c</strain>
    </source>
</reference>
<reference key="5">
    <citation type="journal article" date="2014" name="G3 (Bethesda)">
        <title>The reference genome sequence of Saccharomyces cerevisiae: Then and now.</title>
        <authorList>
            <person name="Engel S.R."/>
            <person name="Dietrich F.S."/>
            <person name="Fisk D.G."/>
            <person name="Binkley G."/>
            <person name="Balakrishnan R."/>
            <person name="Costanzo M.C."/>
            <person name="Dwight S.S."/>
            <person name="Hitz B.C."/>
            <person name="Karra K."/>
            <person name="Nash R.S."/>
            <person name="Weng S."/>
            <person name="Wong E.D."/>
            <person name="Lloyd P."/>
            <person name="Skrzypek M.S."/>
            <person name="Miyasato S.R."/>
            <person name="Simison M."/>
            <person name="Cherry J.M."/>
        </authorList>
    </citation>
    <scope>GENOME REANNOTATION</scope>
    <source>
        <strain>ATCC 204508 / S288c</strain>
    </source>
</reference>
<reference key="6">
    <citation type="journal article" date="2000" name="J. Biol. Chem.">
        <title>Site-directed mutagenesis of the yeast resolving enzyme Cce1 reveals catalytic residues and relationship with the intron-splicing factor Mrs1.</title>
        <authorList>
            <person name="Wardleworth B.N."/>
            <person name="Kvaratskhelia M."/>
            <person name="White M.F."/>
        </authorList>
    </citation>
    <scope>MUTAGENESIS</scope>
    <scope>MAGNESIUM-BINDING SITES</scope>
</reference>
<dbReference type="EC" id="3.1.21.10" evidence="3"/>
<dbReference type="EMBL" id="M65275">
    <property type="protein sequence ID" value="AAB02883.1"/>
    <property type="molecule type" value="Genomic_DNA"/>
</dbReference>
<dbReference type="EMBL" id="S53418">
    <property type="protein sequence ID" value="AAB24906.1"/>
    <property type="molecule type" value="Genomic_DNA"/>
</dbReference>
<dbReference type="EMBL" id="Z28011">
    <property type="protein sequence ID" value="CAA81846.1"/>
    <property type="molecule type" value="Genomic_DNA"/>
</dbReference>
<dbReference type="EMBL" id="BK006944">
    <property type="protein sequence ID" value="DAA09145.1"/>
    <property type="molecule type" value="Genomic_DNA"/>
</dbReference>
<dbReference type="PIR" id="S19635">
    <property type="entry name" value="S19635"/>
</dbReference>
<dbReference type="RefSeq" id="NP_012914.1">
    <property type="nucleotide sequence ID" value="NM_001179577.1"/>
</dbReference>
<dbReference type="SMR" id="Q03702"/>
<dbReference type="BioGRID" id="34121">
    <property type="interactions" value="123"/>
</dbReference>
<dbReference type="DIP" id="DIP-3918N"/>
<dbReference type="FunCoup" id="Q03702">
    <property type="interactions" value="44"/>
</dbReference>
<dbReference type="IntAct" id="Q03702">
    <property type="interactions" value="11"/>
</dbReference>
<dbReference type="STRING" id="4932.YKL011C"/>
<dbReference type="PaxDb" id="4932-YKL011C"/>
<dbReference type="PeptideAtlas" id="Q03702"/>
<dbReference type="EnsemblFungi" id="YKL011C_mRNA">
    <property type="protein sequence ID" value="YKL011C"/>
    <property type="gene ID" value="YKL011C"/>
</dbReference>
<dbReference type="GeneID" id="853858"/>
<dbReference type="KEGG" id="sce:YKL011C"/>
<dbReference type="AGR" id="SGD:S000001494"/>
<dbReference type="SGD" id="S000001494">
    <property type="gene designation" value="CCE1"/>
</dbReference>
<dbReference type="VEuPathDB" id="FungiDB:YKL011C"/>
<dbReference type="eggNOG" id="ENOG502S4DK">
    <property type="taxonomic scope" value="Eukaryota"/>
</dbReference>
<dbReference type="GeneTree" id="ENSGT00940000176739"/>
<dbReference type="HOGENOM" id="CLU_055501_0_0_1"/>
<dbReference type="InParanoid" id="Q03702"/>
<dbReference type="OMA" id="DTGISNF"/>
<dbReference type="OrthoDB" id="5552842at2759"/>
<dbReference type="BioCyc" id="YEAST:G3O-31820-MONOMER"/>
<dbReference type="BioGRID-ORCS" id="853858">
    <property type="hits" value="1 hit in 10 CRISPR screens"/>
</dbReference>
<dbReference type="PRO" id="PR:Q03702"/>
<dbReference type="Proteomes" id="UP000002311">
    <property type="component" value="Chromosome XI"/>
</dbReference>
<dbReference type="RNAct" id="Q03702">
    <property type="molecule type" value="protein"/>
</dbReference>
<dbReference type="GO" id="GO:0005743">
    <property type="term" value="C:mitochondrial inner membrane"/>
    <property type="evidence" value="ECO:0000314"/>
    <property type="project" value="SGD"/>
</dbReference>
<dbReference type="GO" id="GO:0005739">
    <property type="term" value="C:mitochondrion"/>
    <property type="evidence" value="ECO:0000318"/>
    <property type="project" value="GO_Central"/>
</dbReference>
<dbReference type="GO" id="GO:0000402">
    <property type="term" value="F:crossed form four-way junction DNA binding"/>
    <property type="evidence" value="ECO:0000318"/>
    <property type="project" value="GO_Central"/>
</dbReference>
<dbReference type="GO" id="GO:0004520">
    <property type="term" value="F:DNA endonuclease activity"/>
    <property type="evidence" value="ECO:0000314"/>
    <property type="project" value="SGD"/>
</dbReference>
<dbReference type="GO" id="GO:0070336">
    <property type="term" value="F:flap-structured DNA binding"/>
    <property type="evidence" value="ECO:0000318"/>
    <property type="project" value="GO_Central"/>
</dbReference>
<dbReference type="GO" id="GO:0046872">
    <property type="term" value="F:metal ion binding"/>
    <property type="evidence" value="ECO:0007669"/>
    <property type="project" value="UniProtKB-KW"/>
</dbReference>
<dbReference type="GO" id="GO:0000403">
    <property type="term" value="F:Y-form DNA binding"/>
    <property type="evidence" value="ECO:0000318"/>
    <property type="project" value="GO_Central"/>
</dbReference>
<dbReference type="GO" id="GO:0000002">
    <property type="term" value="P:mitochondrial genome maintenance"/>
    <property type="evidence" value="ECO:0000316"/>
    <property type="project" value="SGD"/>
</dbReference>
<dbReference type="CDD" id="cd16963">
    <property type="entry name" value="CCE1"/>
    <property type="match status" value="1"/>
</dbReference>
<dbReference type="FunFam" id="3.30.420.10:FF:000160">
    <property type="entry name" value="Cruciform cutting endonuclease"/>
    <property type="match status" value="1"/>
</dbReference>
<dbReference type="Gene3D" id="3.30.420.10">
    <property type="entry name" value="Ribonuclease H-like superfamily/Ribonuclease H"/>
    <property type="match status" value="1"/>
</dbReference>
<dbReference type="InterPro" id="IPR039197">
    <property type="entry name" value="Mrs1/Cce1"/>
</dbReference>
<dbReference type="InterPro" id="IPR012337">
    <property type="entry name" value="RNaseH-like_sf"/>
</dbReference>
<dbReference type="InterPro" id="IPR036397">
    <property type="entry name" value="RNaseH_sf"/>
</dbReference>
<dbReference type="InterPro" id="IPR015242">
    <property type="entry name" value="Ydc2_cat"/>
</dbReference>
<dbReference type="PANTHER" id="PTHR28072">
    <property type="entry name" value="CRUCIFORM CUTTING ENDONUCLEASE 1, MITOCHONDRIAL-RELATED"/>
    <property type="match status" value="1"/>
</dbReference>
<dbReference type="PANTHER" id="PTHR28072:SF1">
    <property type="entry name" value="CRUCIFORM CUTTING ENDONUCLEASE 1, MITOCHONDRIAL-RELATED"/>
    <property type="match status" value="1"/>
</dbReference>
<dbReference type="Pfam" id="PF09159">
    <property type="entry name" value="Ydc2-catalyt"/>
    <property type="match status" value="1"/>
</dbReference>
<dbReference type="SUPFAM" id="SSF53098">
    <property type="entry name" value="Ribonuclease H-like"/>
    <property type="match status" value="1"/>
</dbReference>
<sequence>MSTAQKAKILQLIDSCCQNAKSTQLKSLSFVIGAVNGTTKEAKRTYIQEQCEFLEKLRQQKIREGRINILSMDAGVSNFAFSKMQLLNNDPLPKVLDWQKINLEEKFFQNLKKLSLNPAETSELVFNLTEYLFESMPIPDMFTIERQRTRTMSSRHILDPILKVNILEQILFSNLENKMKYTNKIPNTSKLRYMVCSSDPHRMTSYWCIPREETPTSSKKLKSNKHSKDSRIKLVKKILSTSILEGNSTSSTKLVEFIGVWNNRIRNALTKKKSFKLCDILEIQDNSGVRKDDDLADSFLHCLSWMEWLKNYESITELLNSKTLVKTQFGQVFEFCENKVQKLKFLQNTYNND</sequence>
<comment type="function">
    <text evidence="3">Capable of resolving Holliday junctions. Specific for 4-way junctions. Seems to be important for the maintenance of mitochondrial DNA. Cleaves fixed junctions at the point of strand exchange. Cleaves after 5'-CT-3' sequence.</text>
</comment>
<comment type="catalytic activity">
    <reaction evidence="3">
        <text>Endonucleolytic cleavage at a junction such as a reciprocal single-stranded crossover between two homologous DNA duplexes (Holliday junction).</text>
        <dbReference type="EC" id="3.1.21.10"/>
    </reaction>
</comment>
<comment type="cofactor">
    <cofactor evidence="3">
        <name>Mg(2+)</name>
        <dbReference type="ChEBI" id="CHEBI:18420"/>
    </cofactor>
</comment>
<comment type="subunit">
    <text evidence="3">Homodimer.</text>
</comment>
<comment type="subcellular location">
    <subcellularLocation>
        <location>Mitochondrion</location>
    </subcellularLocation>
</comment>
<gene>
    <name type="primary">CCE1</name>
    <name type="ordered locus">YKL011C</name>
    <name type="ORF">YKL164</name>
</gene>
<protein>
    <recommendedName>
        <fullName>Cruciform cutting endonuclease 1, mitochondrial</fullName>
        <ecNumber evidence="3">3.1.21.10</ecNumber>
    </recommendedName>
</protein>
<keyword id="KW-0255">Endonuclease</keyword>
<keyword id="KW-0378">Hydrolase</keyword>
<keyword id="KW-0460">Magnesium</keyword>
<keyword id="KW-0479">Metal-binding</keyword>
<keyword id="KW-0496">Mitochondrion</keyword>
<keyword id="KW-0540">Nuclease</keyword>
<keyword id="KW-1185">Reference proteome</keyword>
<keyword id="KW-0809">Transit peptide</keyword>
<evidence type="ECO:0000255" key="1"/>
<evidence type="ECO:0000269" key="2">
    <source>
    </source>
</evidence>
<evidence type="ECO:0000269" key="3">
    <source>
    </source>
</evidence>
<organism>
    <name type="scientific">Saccharomyces cerevisiae (strain ATCC 204508 / S288c)</name>
    <name type="common">Baker's yeast</name>
    <dbReference type="NCBI Taxonomy" id="559292"/>
    <lineage>
        <taxon>Eukaryota</taxon>
        <taxon>Fungi</taxon>
        <taxon>Dikarya</taxon>
        <taxon>Ascomycota</taxon>
        <taxon>Saccharomycotina</taxon>
        <taxon>Saccharomycetes</taxon>
        <taxon>Saccharomycetales</taxon>
        <taxon>Saccharomycetaceae</taxon>
        <taxon>Saccharomyces</taxon>
    </lineage>
</organism>
<name>CCE1_YEAST</name>
<accession>Q03702</accession>
<accession>D6VXS5</accession>